<name>SRY_BOSJA</name>
<proteinExistence type="inferred from homology"/>
<sequence length="229" mass="26645">MFRVLNDDVYSPAVVQQQTTLAFRKDSSLCTDSHSANDQCERGEHVRESSQDHVKRPMNAFIVWSRERRRKVALENPKMKNSDISKQLGYEWKRLTDAEKRPFFEEAQRLLAIHRDKHPGYKYRPRRRAKRPQKSLPADSSILCNPMHVETLHPFTYRDGCAKTTYSQMESQLSRSQSVIITNSLLQKEHHSSWTSLGHNKVTLATRISADFPFNKSLEPGLSCAYFQY</sequence>
<organism>
    <name type="scientific">Bos javanicus</name>
    <name type="common">Wild banteng</name>
    <dbReference type="NCBI Taxonomy" id="9906"/>
    <lineage>
        <taxon>Eukaryota</taxon>
        <taxon>Metazoa</taxon>
        <taxon>Chordata</taxon>
        <taxon>Craniata</taxon>
        <taxon>Vertebrata</taxon>
        <taxon>Euteleostomi</taxon>
        <taxon>Mammalia</taxon>
        <taxon>Eutheria</taxon>
        <taxon>Laurasiatheria</taxon>
        <taxon>Artiodactyla</taxon>
        <taxon>Ruminantia</taxon>
        <taxon>Pecora</taxon>
        <taxon>Bovidae</taxon>
        <taxon>Bovinae</taxon>
        <taxon>Bos</taxon>
    </lineage>
</organism>
<keyword id="KW-0007">Acetylation</keyword>
<keyword id="KW-0010">Activator</keyword>
<keyword id="KW-0112">Calmodulin-binding</keyword>
<keyword id="KW-0963">Cytoplasm</keyword>
<keyword id="KW-0221">Differentiation</keyword>
<keyword id="KW-0238">DNA-binding</keyword>
<keyword id="KW-0539">Nucleus</keyword>
<keyword id="KW-0678">Repressor</keyword>
<keyword id="KW-0726">Sexual differentiation</keyword>
<keyword id="KW-0804">Transcription</keyword>
<keyword id="KW-0805">Transcription regulation</keyword>
<accession>Q8SPQ1</accession>
<reference key="1">
    <citation type="journal article" date="2003" name="Anim. Genet.">
        <title>Phylogenies using mtDNA and SRY provide evidence for male-mediated introgression in Asian domestic cattle.</title>
        <authorList>
            <person name="Kikkawa Y."/>
            <person name="Takada T."/>
            <person name="Sutopo X."/>
            <person name="Nomura K."/>
            <person name="Namikawa T."/>
            <person name="Yonekawa H."/>
            <person name="Amano T."/>
        </authorList>
    </citation>
    <scope>NUCLEOTIDE SEQUENCE [GENOMIC DNA]</scope>
</reference>
<reference key="2">
    <citation type="journal article" date="2004" name="Mol. Biol. Evol.">
        <title>Maternal and paternal lineages in cross-breeding bovine species. Has wisent a hybrid origin?</title>
        <authorList>
            <person name="Verkaar E.L.C."/>
            <person name="Nijman I.J."/>
            <person name="Beeke M."/>
            <person name="Hanekamp E."/>
            <person name="Lenstra J.A."/>
        </authorList>
    </citation>
    <scope>NUCLEOTIDE SEQUENCE [GENOMIC DNA]</scope>
</reference>
<gene>
    <name type="primary">SRY</name>
    <name type="synonym">TDF</name>
</gene>
<protein>
    <recommendedName>
        <fullName>Sex-determining region Y protein</fullName>
    </recommendedName>
    <alternativeName>
        <fullName>Testis-determining factor</fullName>
    </alternativeName>
</protein>
<comment type="function">
    <text evidence="1 2">Transcriptional regulator that controls a genetic switch in male development. It is necessary and sufficient for initiating male sex determination by directing the development of supporting cell precursors (pre-Sertoli cells) as Sertoli rather than granulosa cells. Involved in different aspects of gene regulation including promoter activation or repression. Binds to the DNA consensus sequence 5'-[AT]AACAA[AT]-3'. SRY HMG box recognizes DNA by partial intercalation in the minor groove and promotes DNA bending. Also involved in pre-mRNA splicing (By similarity). In male adult brain involved in the maintenance of motor functions of dopaminergic neurons (By similarity).</text>
</comment>
<comment type="subunit">
    <text evidence="2">Interacts with CALM, EP300, HDAC3, KPNB1, ZNF208 isoform KRAB-O, PARP1, SLC9A3R2 and WT1. The interaction with EP300 modulates its DNA-binding activity. The interaction with KPNB1 is sensitive to dissociation by Ran in the GTP-bound form. Interaction with PARP1 impaired its DNA-binding activity.</text>
</comment>
<comment type="subcellular location">
    <subcellularLocation>
        <location evidence="2">Nucleus speckle</location>
    </subcellularLocation>
    <subcellularLocation>
        <location evidence="2">Cytoplasm</location>
    </subcellularLocation>
    <subcellularLocation>
        <location evidence="2">Nucleus</location>
    </subcellularLocation>
</comment>
<comment type="PTM">
    <text evidence="2">Acetylation of Lys-130 contributes to its nuclear localization and enhances its interaction with KPNB1. Deacetylated by HDAC3.</text>
</comment>
<comment type="similarity">
    <text evidence="5">Belongs to the SRY family.</text>
</comment>
<comment type="online information" name="Protein Spotlight">
    <link uri="https://www.proteinspotlight.org/back_issues/080"/>
    <text>The tenuous nature of sex - Issue 80 of March 2007</text>
</comment>
<dbReference type="EMBL" id="AB077319">
    <property type="protein sequence ID" value="BAC41384.1"/>
    <property type="molecule type" value="Genomic_DNA"/>
</dbReference>
<dbReference type="EMBL" id="AY079146">
    <property type="protein sequence ID" value="AAL86547.1"/>
    <property type="molecule type" value="Genomic_DNA"/>
</dbReference>
<dbReference type="RefSeq" id="XP_061266598.1">
    <property type="nucleotide sequence ID" value="XM_061410614.1"/>
</dbReference>
<dbReference type="SMR" id="Q8SPQ1"/>
<dbReference type="GeneID" id="133243880"/>
<dbReference type="GO" id="GO:0005737">
    <property type="term" value="C:cytoplasm"/>
    <property type="evidence" value="ECO:0007669"/>
    <property type="project" value="UniProtKB-SubCell"/>
</dbReference>
<dbReference type="GO" id="GO:0016607">
    <property type="term" value="C:nuclear speck"/>
    <property type="evidence" value="ECO:0007669"/>
    <property type="project" value="UniProtKB-SubCell"/>
</dbReference>
<dbReference type="GO" id="GO:0005634">
    <property type="term" value="C:nucleus"/>
    <property type="evidence" value="ECO:0000250"/>
    <property type="project" value="UniProtKB"/>
</dbReference>
<dbReference type="GO" id="GO:0005516">
    <property type="term" value="F:calmodulin binding"/>
    <property type="evidence" value="ECO:0007669"/>
    <property type="project" value="UniProtKB-KW"/>
</dbReference>
<dbReference type="GO" id="GO:0001228">
    <property type="term" value="F:DNA-binding transcription activator activity, RNA polymerase II-specific"/>
    <property type="evidence" value="ECO:0007669"/>
    <property type="project" value="TreeGrafter"/>
</dbReference>
<dbReference type="GO" id="GO:0000978">
    <property type="term" value="F:RNA polymerase II cis-regulatory region sequence-specific DNA binding"/>
    <property type="evidence" value="ECO:0007669"/>
    <property type="project" value="TreeGrafter"/>
</dbReference>
<dbReference type="GO" id="GO:0030154">
    <property type="term" value="P:cell differentiation"/>
    <property type="evidence" value="ECO:0007669"/>
    <property type="project" value="UniProtKB-KW"/>
</dbReference>
<dbReference type="GO" id="GO:0030238">
    <property type="term" value="P:male sex determination"/>
    <property type="evidence" value="ECO:0007669"/>
    <property type="project" value="InterPro"/>
</dbReference>
<dbReference type="GO" id="GO:0007548">
    <property type="term" value="P:sex differentiation"/>
    <property type="evidence" value="ECO:0007669"/>
    <property type="project" value="UniProtKB-KW"/>
</dbReference>
<dbReference type="CDD" id="cd22028">
    <property type="entry name" value="HMG-box_SoxA_SoxB_SoxG"/>
    <property type="match status" value="1"/>
</dbReference>
<dbReference type="FunFam" id="1.10.30.10:FF:000002">
    <property type="entry name" value="transcription factor Sox-2"/>
    <property type="match status" value="1"/>
</dbReference>
<dbReference type="Gene3D" id="1.10.30.10">
    <property type="entry name" value="High mobility group box domain"/>
    <property type="match status" value="1"/>
</dbReference>
<dbReference type="InterPro" id="IPR009071">
    <property type="entry name" value="HMG_box_dom"/>
</dbReference>
<dbReference type="InterPro" id="IPR036910">
    <property type="entry name" value="HMG_box_dom_sf"/>
</dbReference>
<dbReference type="InterPro" id="IPR017253">
    <property type="entry name" value="SRY"/>
</dbReference>
<dbReference type="InterPro" id="IPR050140">
    <property type="entry name" value="SRY-related_HMG-box_TF-like"/>
</dbReference>
<dbReference type="PANTHER" id="PTHR10270:SF161">
    <property type="entry name" value="SEX-DETERMINING REGION Y PROTEIN"/>
    <property type="match status" value="1"/>
</dbReference>
<dbReference type="PANTHER" id="PTHR10270">
    <property type="entry name" value="SOX TRANSCRIPTION FACTOR"/>
    <property type="match status" value="1"/>
</dbReference>
<dbReference type="Pfam" id="PF00505">
    <property type="entry name" value="HMG_box"/>
    <property type="match status" value="1"/>
</dbReference>
<dbReference type="PIRSF" id="PIRSF037653">
    <property type="entry name" value="SRY"/>
    <property type="match status" value="1"/>
</dbReference>
<dbReference type="SMART" id="SM00398">
    <property type="entry name" value="HMG"/>
    <property type="match status" value="1"/>
</dbReference>
<dbReference type="SUPFAM" id="SSF47095">
    <property type="entry name" value="HMG-box"/>
    <property type="match status" value="1"/>
</dbReference>
<dbReference type="PROSITE" id="PS50118">
    <property type="entry name" value="HMG_BOX_2"/>
    <property type="match status" value="1"/>
</dbReference>
<evidence type="ECO:0000250" key="1">
    <source>
        <dbReference type="UniProtKB" id="P36394"/>
    </source>
</evidence>
<evidence type="ECO:0000250" key="2">
    <source>
        <dbReference type="UniProtKB" id="Q05066"/>
    </source>
</evidence>
<evidence type="ECO:0000255" key="3">
    <source>
        <dbReference type="PROSITE-ProRule" id="PRU00267"/>
    </source>
</evidence>
<evidence type="ECO:0000256" key="4">
    <source>
        <dbReference type="SAM" id="MobiDB-lite"/>
    </source>
</evidence>
<evidence type="ECO:0000305" key="5"/>
<feature type="chain" id="PRO_0000048646" description="Sex-determining region Y protein">
    <location>
        <begin position="1"/>
        <end position="229"/>
    </location>
</feature>
<feature type="DNA-binding region" description="HMG box" evidence="3">
    <location>
        <begin position="54"/>
        <end position="122"/>
    </location>
</feature>
<feature type="region of interest" description="Disordered" evidence="4">
    <location>
        <begin position="32"/>
        <end position="52"/>
    </location>
</feature>
<feature type="compositionally biased region" description="Basic and acidic residues" evidence="4">
    <location>
        <begin position="39"/>
        <end position="52"/>
    </location>
</feature>